<comment type="function">
    <text evidence="1">Part of the Sec protein translocase complex. Interacts with the SecYEG preprotein conducting channel. Has a central role in coupling the hydrolysis of ATP to the transfer of proteins into and across the cell membrane, serving both as a receptor for the preprotein-SecB complex and as an ATP-driven molecular motor driving the stepwise translocation of polypeptide chains across the membrane.</text>
</comment>
<comment type="catalytic activity">
    <reaction evidence="1">
        <text>ATP + H2O + cellular proteinSide 1 = ADP + phosphate + cellular proteinSide 2.</text>
        <dbReference type="EC" id="7.4.2.8"/>
    </reaction>
</comment>
<comment type="cofactor">
    <cofactor evidence="1">
        <name>Zn(2+)</name>
        <dbReference type="ChEBI" id="CHEBI:29105"/>
    </cofactor>
    <text evidence="1">May bind 1 zinc ion per subunit.</text>
</comment>
<comment type="subunit">
    <text evidence="1">Monomer and homodimer. Part of the essential Sec protein translocation apparatus which comprises SecA, SecYEG and auxiliary proteins SecDF-YajC and YidC.</text>
</comment>
<comment type="subcellular location">
    <subcellularLocation>
        <location evidence="1">Cell inner membrane</location>
        <topology evidence="1">Peripheral membrane protein</topology>
        <orientation evidence="1">Cytoplasmic side</orientation>
    </subcellularLocation>
    <subcellularLocation>
        <location evidence="1">Cytoplasm</location>
    </subcellularLocation>
    <text evidence="1">Distribution is 50-50.</text>
</comment>
<comment type="similarity">
    <text evidence="1">Belongs to the SecA family.</text>
</comment>
<sequence>MLSILKKLFGTANDRTVKKLFSEITKINSLEPAIQKLSDEELKNKTVEFKEKLKNGATLDDIVYEAFAVVREAARRVCGMRHFDVQLIGGLILHRGMITEMRTGEGKTLVATLPAYLNALTGKGVHVVTVNDYLASRDSASMGKIYNFLGLSVGCIVAGMPDEAKRAAYNADITHATNNELGFDYLRDNMKYSLQERVLRPFNFAIIDEVDSILIDEARTPLVISGPVNDNSELYGKIDKIVRMLNTSDFEKDEKLKTINLTETGITHIESLLSKEHLIKPDTGLYDFENLTLVHYVNQALRAHNMFTVDVDYLVREGKVMIIDEFTGRVMEGRRYSEGLHQALEAKENVKIQNENQTLASITFQNYFRNYPKLSGMTGTAMTEAPELKDIYNLDVVAVPTHNKVTRLDLDDEIYGSKKEKYDAILKLIKDCYDRGQPILVGTISIEKSEELSSVLNKEKIPHKVLNAKFHEQEAFIIAQAGRFKAVTIATNMAGRGTDIMLGGNPEMLIEQLDEDHNYETKAAEIKAQISEEKKQVIEAGGLFVIGTERHESRRIDNQLRGRSGRQGDPGKTKFFLSLDDDLMRIFASDRISGVLRTLGLKDGEAIHHPMISRSLEKAQQKVEGHNYEMRKNLLRFDDVMNDQRKIIYEQRTEIIKSKDSHGFLNSTTEELAKKIVLTFMPVGSYREDWDIENLSVELHRVFSMKFDHNLVSKNDVTEEEITKIVIQTAHDIYKSKEEAYSSELMHNAVKYILLTTLDQVWKDHLYSLDHLRQGISLRAYAQKDPLSEYKREAFNLFEQMLNNLKELFIQTVYHFHIDLKHIQKEDVSLEHKKLQKNMRESREDPAFSKYNAGSSLETDLKPVVSRVDPKDRNPDDPTSWGRVSRNELCPCGSGKKYKYCHGANE</sequence>
<accession>Q4UKY1</accession>
<organism>
    <name type="scientific">Rickettsia felis (strain ATCC VR-1525 / URRWXCal2)</name>
    <name type="common">Rickettsia azadi</name>
    <dbReference type="NCBI Taxonomy" id="315456"/>
    <lineage>
        <taxon>Bacteria</taxon>
        <taxon>Pseudomonadati</taxon>
        <taxon>Pseudomonadota</taxon>
        <taxon>Alphaproteobacteria</taxon>
        <taxon>Rickettsiales</taxon>
        <taxon>Rickettsiaceae</taxon>
        <taxon>Rickettsieae</taxon>
        <taxon>Rickettsia</taxon>
        <taxon>spotted fever group</taxon>
    </lineage>
</organism>
<dbReference type="EC" id="7.4.2.8" evidence="1"/>
<dbReference type="EMBL" id="CP000053">
    <property type="protein sequence ID" value="AAY61792.1"/>
    <property type="molecule type" value="Genomic_DNA"/>
</dbReference>
<dbReference type="SMR" id="Q4UKY1"/>
<dbReference type="STRING" id="315456.RF_0941"/>
<dbReference type="KEGG" id="rfe:RF_0941"/>
<dbReference type="eggNOG" id="COG0653">
    <property type="taxonomic scope" value="Bacteria"/>
</dbReference>
<dbReference type="HOGENOM" id="CLU_005314_3_0_5"/>
<dbReference type="OrthoDB" id="9805579at2"/>
<dbReference type="Proteomes" id="UP000008548">
    <property type="component" value="Chromosome"/>
</dbReference>
<dbReference type="GO" id="GO:0031522">
    <property type="term" value="C:cell envelope Sec protein transport complex"/>
    <property type="evidence" value="ECO:0007669"/>
    <property type="project" value="TreeGrafter"/>
</dbReference>
<dbReference type="GO" id="GO:0005829">
    <property type="term" value="C:cytosol"/>
    <property type="evidence" value="ECO:0007669"/>
    <property type="project" value="TreeGrafter"/>
</dbReference>
<dbReference type="GO" id="GO:0005886">
    <property type="term" value="C:plasma membrane"/>
    <property type="evidence" value="ECO:0007669"/>
    <property type="project" value="UniProtKB-SubCell"/>
</dbReference>
<dbReference type="GO" id="GO:0005524">
    <property type="term" value="F:ATP binding"/>
    <property type="evidence" value="ECO:0007669"/>
    <property type="project" value="UniProtKB-UniRule"/>
</dbReference>
<dbReference type="GO" id="GO:0046872">
    <property type="term" value="F:metal ion binding"/>
    <property type="evidence" value="ECO:0007669"/>
    <property type="project" value="UniProtKB-KW"/>
</dbReference>
<dbReference type="GO" id="GO:0008564">
    <property type="term" value="F:protein-exporting ATPase activity"/>
    <property type="evidence" value="ECO:0007669"/>
    <property type="project" value="UniProtKB-EC"/>
</dbReference>
<dbReference type="GO" id="GO:0065002">
    <property type="term" value="P:intracellular protein transmembrane transport"/>
    <property type="evidence" value="ECO:0007669"/>
    <property type="project" value="UniProtKB-UniRule"/>
</dbReference>
<dbReference type="GO" id="GO:0017038">
    <property type="term" value="P:protein import"/>
    <property type="evidence" value="ECO:0007669"/>
    <property type="project" value="InterPro"/>
</dbReference>
<dbReference type="GO" id="GO:0006605">
    <property type="term" value="P:protein targeting"/>
    <property type="evidence" value="ECO:0007669"/>
    <property type="project" value="UniProtKB-UniRule"/>
</dbReference>
<dbReference type="GO" id="GO:0043952">
    <property type="term" value="P:protein transport by the Sec complex"/>
    <property type="evidence" value="ECO:0007669"/>
    <property type="project" value="TreeGrafter"/>
</dbReference>
<dbReference type="CDD" id="cd17928">
    <property type="entry name" value="DEXDc_SecA"/>
    <property type="match status" value="1"/>
</dbReference>
<dbReference type="CDD" id="cd18803">
    <property type="entry name" value="SF2_C_secA"/>
    <property type="match status" value="1"/>
</dbReference>
<dbReference type="FunFam" id="3.40.50.300:FF:000113">
    <property type="entry name" value="Preprotein translocase subunit SecA"/>
    <property type="match status" value="1"/>
</dbReference>
<dbReference type="FunFam" id="3.90.1440.10:FF:000001">
    <property type="entry name" value="Preprotein translocase subunit SecA"/>
    <property type="match status" value="1"/>
</dbReference>
<dbReference type="FunFam" id="1.10.3060.10:FF:000003">
    <property type="entry name" value="Protein translocase subunit SecA"/>
    <property type="match status" value="1"/>
</dbReference>
<dbReference type="FunFam" id="3.40.50.300:FF:000334">
    <property type="entry name" value="Protein translocase subunit SecA"/>
    <property type="match status" value="1"/>
</dbReference>
<dbReference type="Gene3D" id="1.10.3060.10">
    <property type="entry name" value="Helical scaffold and wing domains of SecA"/>
    <property type="match status" value="1"/>
</dbReference>
<dbReference type="Gene3D" id="3.40.50.300">
    <property type="entry name" value="P-loop containing nucleotide triphosphate hydrolases"/>
    <property type="match status" value="2"/>
</dbReference>
<dbReference type="Gene3D" id="3.90.1440.10">
    <property type="entry name" value="SecA, preprotein cross-linking domain"/>
    <property type="match status" value="1"/>
</dbReference>
<dbReference type="HAMAP" id="MF_01382">
    <property type="entry name" value="SecA"/>
    <property type="match status" value="1"/>
</dbReference>
<dbReference type="InterPro" id="IPR014001">
    <property type="entry name" value="Helicase_ATP-bd"/>
</dbReference>
<dbReference type="InterPro" id="IPR027417">
    <property type="entry name" value="P-loop_NTPase"/>
</dbReference>
<dbReference type="InterPro" id="IPR004027">
    <property type="entry name" value="SEC_C_motif"/>
</dbReference>
<dbReference type="InterPro" id="IPR000185">
    <property type="entry name" value="SecA"/>
</dbReference>
<dbReference type="InterPro" id="IPR020937">
    <property type="entry name" value="SecA_CS"/>
</dbReference>
<dbReference type="InterPro" id="IPR011115">
    <property type="entry name" value="SecA_DEAD"/>
</dbReference>
<dbReference type="InterPro" id="IPR014018">
    <property type="entry name" value="SecA_motor_DEAD"/>
</dbReference>
<dbReference type="InterPro" id="IPR011130">
    <property type="entry name" value="SecA_preprotein_X-link_dom"/>
</dbReference>
<dbReference type="InterPro" id="IPR044722">
    <property type="entry name" value="SecA_SF2_C"/>
</dbReference>
<dbReference type="InterPro" id="IPR011116">
    <property type="entry name" value="SecA_Wing/Scaffold"/>
</dbReference>
<dbReference type="InterPro" id="IPR036266">
    <property type="entry name" value="SecA_Wing/Scaffold_sf"/>
</dbReference>
<dbReference type="InterPro" id="IPR036670">
    <property type="entry name" value="SecA_X-link_sf"/>
</dbReference>
<dbReference type="NCBIfam" id="NF009538">
    <property type="entry name" value="PRK12904.1"/>
    <property type="match status" value="1"/>
</dbReference>
<dbReference type="NCBIfam" id="TIGR00963">
    <property type="entry name" value="secA"/>
    <property type="match status" value="1"/>
</dbReference>
<dbReference type="PANTHER" id="PTHR30612:SF0">
    <property type="entry name" value="CHLOROPLAST PROTEIN-TRANSPORTING ATPASE"/>
    <property type="match status" value="1"/>
</dbReference>
<dbReference type="PANTHER" id="PTHR30612">
    <property type="entry name" value="SECA INNER MEMBRANE COMPONENT OF SEC PROTEIN SECRETION SYSTEM"/>
    <property type="match status" value="1"/>
</dbReference>
<dbReference type="Pfam" id="PF21090">
    <property type="entry name" value="P-loop_SecA"/>
    <property type="match status" value="1"/>
</dbReference>
<dbReference type="Pfam" id="PF02810">
    <property type="entry name" value="SEC-C"/>
    <property type="match status" value="1"/>
</dbReference>
<dbReference type="Pfam" id="PF07517">
    <property type="entry name" value="SecA_DEAD"/>
    <property type="match status" value="1"/>
</dbReference>
<dbReference type="Pfam" id="PF01043">
    <property type="entry name" value="SecA_PP_bind"/>
    <property type="match status" value="1"/>
</dbReference>
<dbReference type="Pfam" id="PF07516">
    <property type="entry name" value="SecA_SW"/>
    <property type="match status" value="1"/>
</dbReference>
<dbReference type="PRINTS" id="PR00906">
    <property type="entry name" value="SECA"/>
</dbReference>
<dbReference type="SMART" id="SM00957">
    <property type="entry name" value="SecA_DEAD"/>
    <property type="match status" value="1"/>
</dbReference>
<dbReference type="SMART" id="SM00958">
    <property type="entry name" value="SecA_PP_bind"/>
    <property type="match status" value="1"/>
</dbReference>
<dbReference type="SUPFAM" id="SSF81886">
    <property type="entry name" value="Helical scaffold and wing domains of SecA"/>
    <property type="match status" value="1"/>
</dbReference>
<dbReference type="SUPFAM" id="SSF52540">
    <property type="entry name" value="P-loop containing nucleoside triphosphate hydrolases"/>
    <property type="match status" value="2"/>
</dbReference>
<dbReference type="SUPFAM" id="SSF81767">
    <property type="entry name" value="Pre-protein crosslinking domain of SecA"/>
    <property type="match status" value="1"/>
</dbReference>
<dbReference type="PROSITE" id="PS01312">
    <property type="entry name" value="SECA"/>
    <property type="match status" value="1"/>
</dbReference>
<dbReference type="PROSITE" id="PS51196">
    <property type="entry name" value="SECA_MOTOR_DEAD"/>
    <property type="match status" value="1"/>
</dbReference>
<name>SECA_RICFE</name>
<proteinExistence type="inferred from homology"/>
<keyword id="KW-0067">ATP-binding</keyword>
<keyword id="KW-0997">Cell inner membrane</keyword>
<keyword id="KW-1003">Cell membrane</keyword>
<keyword id="KW-0963">Cytoplasm</keyword>
<keyword id="KW-0472">Membrane</keyword>
<keyword id="KW-0479">Metal-binding</keyword>
<keyword id="KW-0547">Nucleotide-binding</keyword>
<keyword id="KW-0653">Protein transport</keyword>
<keyword id="KW-1278">Translocase</keyword>
<keyword id="KW-0811">Translocation</keyword>
<keyword id="KW-0813">Transport</keyword>
<keyword id="KW-0862">Zinc</keyword>
<reference key="1">
    <citation type="journal article" date="2005" name="PLoS Biol.">
        <title>The genome sequence of Rickettsia felis identifies the first putative conjugative plasmid in an obligate intracellular parasite.</title>
        <authorList>
            <person name="Ogata H."/>
            <person name="Renesto P."/>
            <person name="Audic S."/>
            <person name="Robert C."/>
            <person name="Blanc G."/>
            <person name="Fournier P.-E."/>
            <person name="Parinello H."/>
            <person name="Claverie J.-M."/>
            <person name="Raoult D."/>
        </authorList>
    </citation>
    <scope>NUCLEOTIDE SEQUENCE [LARGE SCALE GENOMIC DNA]</scope>
    <source>
        <strain>ATCC VR-1525 / URRWXCal2</strain>
    </source>
</reference>
<protein>
    <recommendedName>
        <fullName evidence="1">Protein translocase subunit SecA</fullName>
        <ecNumber evidence="1">7.4.2.8</ecNumber>
    </recommendedName>
</protein>
<gene>
    <name evidence="1" type="primary">secA</name>
    <name type="ordered locus">RF_0941</name>
</gene>
<feature type="chain" id="PRO_0000277301" description="Protein translocase subunit SecA">
    <location>
        <begin position="1"/>
        <end position="906"/>
    </location>
</feature>
<feature type="region of interest" description="Disordered" evidence="2">
    <location>
        <begin position="834"/>
        <end position="887"/>
    </location>
</feature>
<feature type="compositionally biased region" description="Basic and acidic residues" evidence="2">
    <location>
        <begin position="834"/>
        <end position="847"/>
    </location>
</feature>
<feature type="binding site" evidence="1">
    <location>
        <position position="86"/>
    </location>
    <ligand>
        <name>ATP</name>
        <dbReference type="ChEBI" id="CHEBI:30616"/>
    </ligand>
</feature>
<feature type="binding site" evidence="1">
    <location>
        <begin position="104"/>
        <end position="108"/>
    </location>
    <ligand>
        <name>ATP</name>
        <dbReference type="ChEBI" id="CHEBI:30616"/>
    </ligand>
</feature>
<feature type="binding site" evidence="1">
    <location>
        <position position="499"/>
    </location>
    <ligand>
        <name>ATP</name>
        <dbReference type="ChEBI" id="CHEBI:30616"/>
    </ligand>
</feature>
<feature type="binding site" evidence="1">
    <location>
        <position position="890"/>
    </location>
    <ligand>
        <name>Zn(2+)</name>
        <dbReference type="ChEBI" id="CHEBI:29105"/>
    </ligand>
</feature>
<feature type="binding site" evidence="1">
    <location>
        <position position="892"/>
    </location>
    <ligand>
        <name>Zn(2+)</name>
        <dbReference type="ChEBI" id="CHEBI:29105"/>
    </ligand>
</feature>
<feature type="binding site" evidence="1">
    <location>
        <position position="901"/>
    </location>
    <ligand>
        <name>Zn(2+)</name>
        <dbReference type="ChEBI" id="CHEBI:29105"/>
    </ligand>
</feature>
<feature type="binding site" evidence="1">
    <location>
        <position position="902"/>
    </location>
    <ligand>
        <name>Zn(2+)</name>
        <dbReference type="ChEBI" id="CHEBI:29105"/>
    </ligand>
</feature>
<evidence type="ECO:0000255" key="1">
    <source>
        <dbReference type="HAMAP-Rule" id="MF_01382"/>
    </source>
</evidence>
<evidence type="ECO:0000256" key="2">
    <source>
        <dbReference type="SAM" id="MobiDB-lite"/>
    </source>
</evidence>